<gene>
    <name evidence="1" type="primary">murD</name>
    <name type="ordered locus">CT0036</name>
</gene>
<feature type="chain" id="PRO_0000108997" description="UDP-N-acetylmuramoylalanine--D-glutamate ligase">
    <location>
        <begin position="1"/>
        <end position="465"/>
    </location>
</feature>
<feature type="binding site" evidence="1">
    <location>
        <begin position="115"/>
        <end position="121"/>
    </location>
    <ligand>
        <name>ATP</name>
        <dbReference type="ChEBI" id="CHEBI:30616"/>
    </ligand>
</feature>
<reference key="1">
    <citation type="journal article" date="2002" name="Proc. Natl. Acad. Sci. U.S.A.">
        <title>The complete genome sequence of Chlorobium tepidum TLS, a photosynthetic, anaerobic, green-sulfur bacterium.</title>
        <authorList>
            <person name="Eisen J.A."/>
            <person name="Nelson K.E."/>
            <person name="Paulsen I.T."/>
            <person name="Heidelberg J.F."/>
            <person name="Wu M."/>
            <person name="Dodson R.J."/>
            <person name="DeBoy R.T."/>
            <person name="Gwinn M.L."/>
            <person name="Nelson W.C."/>
            <person name="Haft D.H."/>
            <person name="Hickey E.K."/>
            <person name="Peterson J.D."/>
            <person name="Durkin A.S."/>
            <person name="Kolonay J.F."/>
            <person name="Yang F."/>
            <person name="Holt I.E."/>
            <person name="Umayam L.A."/>
            <person name="Mason T.M."/>
            <person name="Brenner M."/>
            <person name="Shea T.P."/>
            <person name="Parksey D.S."/>
            <person name="Nierman W.C."/>
            <person name="Feldblyum T.V."/>
            <person name="Hansen C.L."/>
            <person name="Craven M.B."/>
            <person name="Radune D."/>
            <person name="Vamathevan J.J."/>
            <person name="Khouri H.M."/>
            <person name="White O."/>
            <person name="Gruber T.M."/>
            <person name="Ketchum K.A."/>
            <person name="Venter J.C."/>
            <person name="Tettelin H."/>
            <person name="Bryant D.A."/>
            <person name="Fraser C.M."/>
        </authorList>
    </citation>
    <scope>NUCLEOTIDE SEQUENCE [LARGE SCALE GENOMIC DNA]</scope>
    <source>
        <strain>ATCC 49652 / DSM 12025 / NBRC 103806 / TLS</strain>
    </source>
</reference>
<proteinExistence type="inferred from homology"/>
<sequence>MKPEELKGKVASVIGAGKSGVSAAGLLARAGARPFLSEFGAVSPEAAATLRQLGVPFEEGGHSERVFEAALCIVSPGIPQTVPVIREMHARGIPVVSEIELASWFCPARIIGITGTDGKTTTATLLHRICAAEGERKGFRAFSVGNIGIPFSSEVPGMTAADIAVLELSSYQLEACFDFRPNIAVLTNVTPDHMDRYGGSIEAYATAKYRIHARQGAGDTLIYNHDDPILRAHFDRSEPWPFRLVRLGLRAETLDVAPGDFVSVEDGEIVVRASGSTERLMRVDEIMKPGFRGEHNLYNALSSVAAALAAGVAPETMRGVLAGFGGVEHRQELAGNACGLNWINDSKATSVNALRQALQSVPAGMVLIAGGRDKGNDYSAIADLVREKVACIVAIGESRRKIADAFRGVTPVVEAASLAEAVELARQNARPGASVLFSPACSSFDMFRDFEDRGRQFKQLVRELT</sequence>
<comment type="function">
    <text evidence="1">Cell wall formation. Catalyzes the addition of glutamate to the nucleotide precursor UDP-N-acetylmuramoyl-L-alanine (UMA).</text>
</comment>
<comment type="catalytic activity">
    <reaction evidence="1">
        <text>UDP-N-acetyl-alpha-D-muramoyl-L-alanine + D-glutamate + ATP = UDP-N-acetyl-alpha-D-muramoyl-L-alanyl-D-glutamate + ADP + phosphate + H(+)</text>
        <dbReference type="Rhea" id="RHEA:16429"/>
        <dbReference type="ChEBI" id="CHEBI:15378"/>
        <dbReference type="ChEBI" id="CHEBI:29986"/>
        <dbReference type="ChEBI" id="CHEBI:30616"/>
        <dbReference type="ChEBI" id="CHEBI:43474"/>
        <dbReference type="ChEBI" id="CHEBI:83898"/>
        <dbReference type="ChEBI" id="CHEBI:83900"/>
        <dbReference type="ChEBI" id="CHEBI:456216"/>
        <dbReference type="EC" id="6.3.2.9"/>
    </reaction>
</comment>
<comment type="pathway">
    <text evidence="1">Cell wall biogenesis; peptidoglycan biosynthesis.</text>
</comment>
<comment type="subcellular location">
    <subcellularLocation>
        <location evidence="1">Cytoplasm</location>
    </subcellularLocation>
</comment>
<comment type="similarity">
    <text evidence="1">Belongs to the MurCDEF family.</text>
</comment>
<protein>
    <recommendedName>
        <fullName evidence="1">UDP-N-acetylmuramoylalanine--D-glutamate ligase</fullName>
        <ecNumber evidence="1">6.3.2.9</ecNumber>
    </recommendedName>
    <alternativeName>
        <fullName evidence="1">D-glutamic acid-adding enzyme</fullName>
    </alternativeName>
    <alternativeName>
        <fullName evidence="1">UDP-N-acetylmuramoyl-L-alanyl-D-glutamate synthetase</fullName>
    </alternativeName>
</protein>
<dbReference type="EC" id="6.3.2.9" evidence="1"/>
<dbReference type="EMBL" id="AE006470">
    <property type="protein sequence ID" value="AAM71284.1"/>
    <property type="molecule type" value="Genomic_DNA"/>
</dbReference>
<dbReference type="RefSeq" id="NP_660942.1">
    <property type="nucleotide sequence ID" value="NC_002932.3"/>
</dbReference>
<dbReference type="RefSeq" id="WP_010931730.1">
    <property type="nucleotide sequence ID" value="NC_002932.3"/>
</dbReference>
<dbReference type="SMR" id="Q8KGD2"/>
<dbReference type="STRING" id="194439.CT0036"/>
<dbReference type="EnsemblBacteria" id="AAM71284">
    <property type="protein sequence ID" value="AAM71284"/>
    <property type="gene ID" value="CT0036"/>
</dbReference>
<dbReference type="KEGG" id="cte:CT0036"/>
<dbReference type="PATRIC" id="fig|194439.7.peg.35"/>
<dbReference type="eggNOG" id="COG0771">
    <property type="taxonomic scope" value="Bacteria"/>
</dbReference>
<dbReference type="HOGENOM" id="CLU_032540_0_0_10"/>
<dbReference type="OrthoDB" id="9809796at2"/>
<dbReference type="UniPathway" id="UPA00219"/>
<dbReference type="Proteomes" id="UP000001007">
    <property type="component" value="Chromosome"/>
</dbReference>
<dbReference type="GO" id="GO:0005737">
    <property type="term" value="C:cytoplasm"/>
    <property type="evidence" value="ECO:0007669"/>
    <property type="project" value="UniProtKB-SubCell"/>
</dbReference>
<dbReference type="GO" id="GO:0005524">
    <property type="term" value="F:ATP binding"/>
    <property type="evidence" value="ECO:0007669"/>
    <property type="project" value="UniProtKB-UniRule"/>
</dbReference>
<dbReference type="GO" id="GO:0008764">
    <property type="term" value="F:UDP-N-acetylmuramoylalanine-D-glutamate ligase activity"/>
    <property type="evidence" value="ECO:0007669"/>
    <property type="project" value="UniProtKB-UniRule"/>
</dbReference>
<dbReference type="GO" id="GO:0051301">
    <property type="term" value="P:cell division"/>
    <property type="evidence" value="ECO:0007669"/>
    <property type="project" value="UniProtKB-KW"/>
</dbReference>
<dbReference type="GO" id="GO:0071555">
    <property type="term" value="P:cell wall organization"/>
    <property type="evidence" value="ECO:0007669"/>
    <property type="project" value="UniProtKB-KW"/>
</dbReference>
<dbReference type="GO" id="GO:0009252">
    <property type="term" value="P:peptidoglycan biosynthetic process"/>
    <property type="evidence" value="ECO:0007669"/>
    <property type="project" value="UniProtKB-UniRule"/>
</dbReference>
<dbReference type="GO" id="GO:0008360">
    <property type="term" value="P:regulation of cell shape"/>
    <property type="evidence" value="ECO:0007669"/>
    <property type="project" value="UniProtKB-KW"/>
</dbReference>
<dbReference type="Gene3D" id="3.90.190.20">
    <property type="entry name" value="Mur ligase, C-terminal domain"/>
    <property type="match status" value="1"/>
</dbReference>
<dbReference type="Gene3D" id="3.40.1190.10">
    <property type="entry name" value="Mur-like, catalytic domain"/>
    <property type="match status" value="1"/>
</dbReference>
<dbReference type="Gene3D" id="3.40.50.720">
    <property type="entry name" value="NAD(P)-binding Rossmann-like Domain"/>
    <property type="match status" value="1"/>
</dbReference>
<dbReference type="HAMAP" id="MF_00639">
    <property type="entry name" value="MurD"/>
    <property type="match status" value="1"/>
</dbReference>
<dbReference type="InterPro" id="IPR036565">
    <property type="entry name" value="Mur-like_cat_sf"/>
</dbReference>
<dbReference type="InterPro" id="IPR004101">
    <property type="entry name" value="Mur_ligase_C"/>
</dbReference>
<dbReference type="InterPro" id="IPR036615">
    <property type="entry name" value="Mur_ligase_C_dom_sf"/>
</dbReference>
<dbReference type="InterPro" id="IPR013221">
    <property type="entry name" value="Mur_ligase_cen"/>
</dbReference>
<dbReference type="InterPro" id="IPR005762">
    <property type="entry name" value="MurD"/>
</dbReference>
<dbReference type="NCBIfam" id="TIGR01087">
    <property type="entry name" value="murD"/>
    <property type="match status" value="1"/>
</dbReference>
<dbReference type="PANTHER" id="PTHR43692">
    <property type="entry name" value="UDP-N-ACETYLMURAMOYLALANINE--D-GLUTAMATE LIGASE"/>
    <property type="match status" value="1"/>
</dbReference>
<dbReference type="PANTHER" id="PTHR43692:SF1">
    <property type="entry name" value="UDP-N-ACETYLMURAMOYLALANINE--D-GLUTAMATE LIGASE"/>
    <property type="match status" value="1"/>
</dbReference>
<dbReference type="Pfam" id="PF02875">
    <property type="entry name" value="Mur_ligase_C"/>
    <property type="match status" value="1"/>
</dbReference>
<dbReference type="Pfam" id="PF08245">
    <property type="entry name" value="Mur_ligase_M"/>
    <property type="match status" value="1"/>
</dbReference>
<dbReference type="Pfam" id="PF21799">
    <property type="entry name" value="MurD-like_N"/>
    <property type="match status" value="1"/>
</dbReference>
<dbReference type="Pfam" id="PF21377">
    <property type="entry name" value="MurD_N"/>
    <property type="match status" value="1"/>
</dbReference>
<dbReference type="SUPFAM" id="SSF51984">
    <property type="entry name" value="MurCD N-terminal domain"/>
    <property type="match status" value="1"/>
</dbReference>
<dbReference type="SUPFAM" id="SSF53623">
    <property type="entry name" value="MurD-like peptide ligases, catalytic domain"/>
    <property type="match status" value="1"/>
</dbReference>
<dbReference type="SUPFAM" id="SSF53244">
    <property type="entry name" value="MurD-like peptide ligases, peptide-binding domain"/>
    <property type="match status" value="1"/>
</dbReference>
<evidence type="ECO:0000255" key="1">
    <source>
        <dbReference type="HAMAP-Rule" id="MF_00639"/>
    </source>
</evidence>
<accession>Q8KGD2</accession>
<keyword id="KW-0067">ATP-binding</keyword>
<keyword id="KW-0131">Cell cycle</keyword>
<keyword id="KW-0132">Cell division</keyword>
<keyword id="KW-0133">Cell shape</keyword>
<keyword id="KW-0961">Cell wall biogenesis/degradation</keyword>
<keyword id="KW-0963">Cytoplasm</keyword>
<keyword id="KW-0436">Ligase</keyword>
<keyword id="KW-0547">Nucleotide-binding</keyword>
<keyword id="KW-0573">Peptidoglycan synthesis</keyword>
<keyword id="KW-1185">Reference proteome</keyword>
<organism>
    <name type="scientific">Chlorobaculum tepidum (strain ATCC 49652 / DSM 12025 / NBRC 103806 / TLS)</name>
    <name type="common">Chlorobium tepidum</name>
    <dbReference type="NCBI Taxonomy" id="194439"/>
    <lineage>
        <taxon>Bacteria</taxon>
        <taxon>Pseudomonadati</taxon>
        <taxon>Chlorobiota</taxon>
        <taxon>Chlorobiia</taxon>
        <taxon>Chlorobiales</taxon>
        <taxon>Chlorobiaceae</taxon>
        <taxon>Chlorobaculum</taxon>
    </lineage>
</organism>
<name>MURD_CHLTE</name>